<organism>
    <name type="scientific">Mus musculus</name>
    <name type="common">Mouse</name>
    <dbReference type="NCBI Taxonomy" id="10090"/>
    <lineage>
        <taxon>Eukaryota</taxon>
        <taxon>Metazoa</taxon>
        <taxon>Chordata</taxon>
        <taxon>Craniata</taxon>
        <taxon>Vertebrata</taxon>
        <taxon>Euteleostomi</taxon>
        <taxon>Mammalia</taxon>
        <taxon>Eutheria</taxon>
        <taxon>Euarchontoglires</taxon>
        <taxon>Glires</taxon>
        <taxon>Rodentia</taxon>
        <taxon>Myomorpha</taxon>
        <taxon>Muroidea</taxon>
        <taxon>Muridae</taxon>
        <taxon>Murinae</taxon>
        <taxon>Mus</taxon>
        <taxon>Mus</taxon>
    </lineage>
</organism>
<accession>Q8R033</accession>
<accession>A2ANY7</accession>
<name>LYRM2_MOUSE</name>
<dbReference type="EMBL" id="AK044791">
    <property type="protein sequence ID" value="BAC32093.1"/>
    <property type="molecule type" value="mRNA"/>
</dbReference>
<dbReference type="EMBL" id="AL831774">
    <property type="status" value="NOT_ANNOTATED_CDS"/>
    <property type="molecule type" value="Genomic_DNA"/>
</dbReference>
<dbReference type="EMBL" id="CH466538">
    <property type="protein sequence ID" value="EDL05501.1"/>
    <property type="molecule type" value="Genomic_DNA"/>
</dbReference>
<dbReference type="EMBL" id="BC028533">
    <property type="protein sequence ID" value="AAH28533.1"/>
    <property type="molecule type" value="mRNA"/>
</dbReference>
<dbReference type="CCDS" id="CCDS38703.1"/>
<dbReference type="RefSeq" id="NP_780573.1">
    <property type="nucleotide sequence ID" value="NM_175364.4"/>
</dbReference>
<dbReference type="SMR" id="Q8R033"/>
<dbReference type="BioGRID" id="224404">
    <property type="interactions" value="2"/>
</dbReference>
<dbReference type="FunCoup" id="Q8R033">
    <property type="interactions" value="1388"/>
</dbReference>
<dbReference type="STRING" id="10090.ENSMUSP00000061451"/>
<dbReference type="PhosphoSitePlus" id="Q8R033"/>
<dbReference type="PaxDb" id="10090-ENSMUSP00000061451"/>
<dbReference type="PeptideAtlas" id="Q8R033"/>
<dbReference type="ProteomicsDB" id="295740"/>
<dbReference type="Pumba" id="Q8R033"/>
<dbReference type="Antibodypedia" id="54908">
    <property type="antibodies" value="114 antibodies from 23 providers"/>
</dbReference>
<dbReference type="Ensembl" id="ENSMUST00000062802.5">
    <property type="protein sequence ID" value="ENSMUSP00000061451.5"/>
    <property type="gene ID" value="ENSMUSG00000045854.5"/>
</dbReference>
<dbReference type="GeneID" id="108755"/>
<dbReference type="KEGG" id="mmu:108755"/>
<dbReference type="UCSC" id="uc008sfe.2">
    <property type="organism name" value="mouse"/>
</dbReference>
<dbReference type="AGR" id="MGI:1917573"/>
<dbReference type="CTD" id="57226"/>
<dbReference type="MGI" id="MGI:1917573">
    <property type="gene designation" value="Lyrm2"/>
</dbReference>
<dbReference type="VEuPathDB" id="HostDB:ENSMUSG00000045854"/>
<dbReference type="eggNOG" id="ENOG502S8DG">
    <property type="taxonomic scope" value="Eukaryota"/>
</dbReference>
<dbReference type="GeneTree" id="ENSGT00390000002957"/>
<dbReference type="HOGENOM" id="CLU_151409_1_1_1"/>
<dbReference type="InParanoid" id="Q8R033"/>
<dbReference type="OMA" id="YMRDWAR"/>
<dbReference type="OrthoDB" id="74240at2759"/>
<dbReference type="PhylomeDB" id="Q8R033"/>
<dbReference type="TreeFam" id="TF323797"/>
<dbReference type="Reactome" id="R-MMU-6799198">
    <property type="pathway name" value="Complex I biogenesis"/>
</dbReference>
<dbReference type="BioGRID-ORCS" id="108755">
    <property type="hits" value="1 hit in 77 CRISPR screens"/>
</dbReference>
<dbReference type="ChiTaRS" id="Lyrm2">
    <property type="organism name" value="mouse"/>
</dbReference>
<dbReference type="PRO" id="PR:Q8R033"/>
<dbReference type="Proteomes" id="UP000000589">
    <property type="component" value="Chromosome 4"/>
</dbReference>
<dbReference type="RNAct" id="Q8R033">
    <property type="molecule type" value="protein"/>
</dbReference>
<dbReference type="Bgee" id="ENSMUSG00000045854">
    <property type="expression patterns" value="Expressed in saccule of membranous labyrinth and 257 other cell types or tissues"/>
</dbReference>
<dbReference type="GO" id="GO:0005739">
    <property type="term" value="C:mitochondrion"/>
    <property type="evidence" value="ECO:0007005"/>
    <property type="project" value="MGI"/>
</dbReference>
<dbReference type="GO" id="GO:0032981">
    <property type="term" value="P:mitochondrial respiratory chain complex I assembly"/>
    <property type="evidence" value="ECO:0000250"/>
    <property type="project" value="UniProtKB"/>
</dbReference>
<dbReference type="CDD" id="cd20262">
    <property type="entry name" value="Complex1_LYR_LYRM2"/>
    <property type="match status" value="1"/>
</dbReference>
<dbReference type="InterPro" id="IPR008011">
    <property type="entry name" value="Complex1_LYR_dom"/>
</dbReference>
<dbReference type="InterPro" id="IPR045293">
    <property type="entry name" value="Complex1_LYR_LYRM2"/>
</dbReference>
<dbReference type="PANTHER" id="PTHR13675">
    <property type="entry name" value="LYR MOTIF-CONTAINING PROTEIN 2"/>
    <property type="match status" value="1"/>
</dbReference>
<dbReference type="PANTHER" id="PTHR13675:SF3">
    <property type="entry name" value="LYR MOTIF-CONTAINING PROTEIN 2"/>
    <property type="match status" value="1"/>
</dbReference>
<dbReference type="Pfam" id="PF05347">
    <property type="entry name" value="Complex1_LYR"/>
    <property type="match status" value="1"/>
</dbReference>
<protein>
    <recommendedName>
        <fullName>LYR motif-containing protein 2</fullName>
    </recommendedName>
</protein>
<gene>
    <name type="primary">Lyrm2</name>
</gene>
<comment type="function">
    <text evidence="1">Involved in efficient integration of the N-module into mitochondrial respiratory chain complex I.</text>
</comment>
<comment type="subcellular location">
    <subcellularLocation>
        <location evidence="1">Mitochondrion</location>
    </subcellularLocation>
</comment>
<comment type="similarity">
    <text evidence="3">Belongs to the complex I LYR family.</text>
</comment>
<keyword id="KW-0496">Mitochondrion</keyword>
<keyword id="KW-1185">Reference proteome</keyword>
<keyword id="KW-0809">Transit peptide</keyword>
<feature type="transit peptide" description="Mitochondrion" evidence="2">
    <location>
        <begin position="1"/>
        <end position="19"/>
    </location>
</feature>
<feature type="chain" id="PRO_0000251176" description="LYR motif-containing protein 2">
    <location>
        <begin position="20"/>
        <end position="88"/>
    </location>
</feature>
<sequence>MAASRLPPAALTLKQFMRRQQVLLLYRKILRAIRQVPSDSDRKYLQDWAREEFKRNKSATEEDTIRMMITQGNMQLKELERTLALANS</sequence>
<evidence type="ECO:0000250" key="1">
    <source>
        <dbReference type="UniProtKB" id="Q9NU23"/>
    </source>
</evidence>
<evidence type="ECO:0000255" key="2"/>
<evidence type="ECO:0000305" key="3"/>
<proteinExistence type="inferred from homology"/>
<reference key="1">
    <citation type="journal article" date="2005" name="Science">
        <title>The transcriptional landscape of the mammalian genome.</title>
        <authorList>
            <person name="Carninci P."/>
            <person name="Kasukawa T."/>
            <person name="Katayama S."/>
            <person name="Gough J."/>
            <person name="Frith M.C."/>
            <person name="Maeda N."/>
            <person name="Oyama R."/>
            <person name="Ravasi T."/>
            <person name="Lenhard B."/>
            <person name="Wells C."/>
            <person name="Kodzius R."/>
            <person name="Shimokawa K."/>
            <person name="Bajic V.B."/>
            <person name="Brenner S.E."/>
            <person name="Batalov S."/>
            <person name="Forrest A.R."/>
            <person name="Zavolan M."/>
            <person name="Davis M.J."/>
            <person name="Wilming L.G."/>
            <person name="Aidinis V."/>
            <person name="Allen J.E."/>
            <person name="Ambesi-Impiombato A."/>
            <person name="Apweiler R."/>
            <person name="Aturaliya R.N."/>
            <person name="Bailey T.L."/>
            <person name="Bansal M."/>
            <person name="Baxter L."/>
            <person name="Beisel K.W."/>
            <person name="Bersano T."/>
            <person name="Bono H."/>
            <person name="Chalk A.M."/>
            <person name="Chiu K.P."/>
            <person name="Choudhary V."/>
            <person name="Christoffels A."/>
            <person name="Clutterbuck D.R."/>
            <person name="Crowe M.L."/>
            <person name="Dalla E."/>
            <person name="Dalrymple B.P."/>
            <person name="de Bono B."/>
            <person name="Della Gatta G."/>
            <person name="di Bernardo D."/>
            <person name="Down T."/>
            <person name="Engstrom P."/>
            <person name="Fagiolini M."/>
            <person name="Faulkner G."/>
            <person name="Fletcher C.F."/>
            <person name="Fukushima T."/>
            <person name="Furuno M."/>
            <person name="Futaki S."/>
            <person name="Gariboldi M."/>
            <person name="Georgii-Hemming P."/>
            <person name="Gingeras T.R."/>
            <person name="Gojobori T."/>
            <person name="Green R.E."/>
            <person name="Gustincich S."/>
            <person name="Harbers M."/>
            <person name="Hayashi Y."/>
            <person name="Hensch T.K."/>
            <person name="Hirokawa N."/>
            <person name="Hill D."/>
            <person name="Huminiecki L."/>
            <person name="Iacono M."/>
            <person name="Ikeo K."/>
            <person name="Iwama A."/>
            <person name="Ishikawa T."/>
            <person name="Jakt M."/>
            <person name="Kanapin A."/>
            <person name="Katoh M."/>
            <person name="Kawasawa Y."/>
            <person name="Kelso J."/>
            <person name="Kitamura H."/>
            <person name="Kitano H."/>
            <person name="Kollias G."/>
            <person name="Krishnan S.P."/>
            <person name="Kruger A."/>
            <person name="Kummerfeld S.K."/>
            <person name="Kurochkin I.V."/>
            <person name="Lareau L.F."/>
            <person name="Lazarevic D."/>
            <person name="Lipovich L."/>
            <person name="Liu J."/>
            <person name="Liuni S."/>
            <person name="McWilliam S."/>
            <person name="Madan Babu M."/>
            <person name="Madera M."/>
            <person name="Marchionni L."/>
            <person name="Matsuda H."/>
            <person name="Matsuzawa S."/>
            <person name="Miki H."/>
            <person name="Mignone F."/>
            <person name="Miyake S."/>
            <person name="Morris K."/>
            <person name="Mottagui-Tabar S."/>
            <person name="Mulder N."/>
            <person name="Nakano N."/>
            <person name="Nakauchi H."/>
            <person name="Ng P."/>
            <person name="Nilsson R."/>
            <person name="Nishiguchi S."/>
            <person name="Nishikawa S."/>
            <person name="Nori F."/>
            <person name="Ohara O."/>
            <person name="Okazaki Y."/>
            <person name="Orlando V."/>
            <person name="Pang K.C."/>
            <person name="Pavan W.J."/>
            <person name="Pavesi G."/>
            <person name="Pesole G."/>
            <person name="Petrovsky N."/>
            <person name="Piazza S."/>
            <person name="Reed J."/>
            <person name="Reid J.F."/>
            <person name="Ring B.Z."/>
            <person name="Ringwald M."/>
            <person name="Rost B."/>
            <person name="Ruan Y."/>
            <person name="Salzberg S.L."/>
            <person name="Sandelin A."/>
            <person name="Schneider C."/>
            <person name="Schoenbach C."/>
            <person name="Sekiguchi K."/>
            <person name="Semple C.A."/>
            <person name="Seno S."/>
            <person name="Sessa L."/>
            <person name="Sheng Y."/>
            <person name="Shibata Y."/>
            <person name="Shimada H."/>
            <person name="Shimada K."/>
            <person name="Silva D."/>
            <person name="Sinclair B."/>
            <person name="Sperling S."/>
            <person name="Stupka E."/>
            <person name="Sugiura K."/>
            <person name="Sultana R."/>
            <person name="Takenaka Y."/>
            <person name="Taki K."/>
            <person name="Tammoja K."/>
            <person name="Tan S.L."/>
            <person name="Tang S."/>
            <person name="Taylor M.S."/>
            <person name="Tegner J."/>
            <person name="Teichmann S.A."/>
            <person name="Ueda H.R."/>
            <person name="van Nimwegen E."/>
            <person name="Verardo R."/>
            <person name="Wei C.L."/>
            <person name="Yagi K."/>
            <person name="Yamanishi H."/>
            <person name="Zabarovsky E."/>
            <person name="Zhu S."/>
            <person name="Zimmer A."/>
            <person name="Hide W."/>
            <person name="Bult C."/>
            <person name="Grimmond S.M."/>
            <person name="Teasdale R.D."/>
            <person name="Liu E.T."/>
            <person name="Brusic V."/>
            <person name="Quackenbush J."/>
            <person name="Wahlestedt C."/>
            <person name="Mattick J.S."/>
            <person name="Hume D.A."/>
            <person name="Kai C."/>
            <person name="Sasaki D."/>
            <person name="Tomaru Y."/>
            <person name="Fukuda S."/>
            <person name="Kanamori-Katayama M."/>
            <person name="Suzuki M."/>
            <person name="Aoki J."/>
            <person name="Arakawa T."/>
            <person name="Iida J."/>
            <person name="Imamura K."/>
            <person name="Itoh M."/>
            <person name="Kato T."/>
            <person name="Kawaji H."/>
            <person name="Kawagashira N."/>
            <person name="Kawashima T."/>
            <person name="Kojima M."/>
            <person name="Kondo S."/>
            <person name="Konno H."/>
            <person name="Nakano K."/>
            <person name="Ninomiya N."/>
            <person name="Nishio T."/>
            <person name="Okada M."/>
            <person name="Plessy C."/>
            <person name="Shibata K."/>
            <person name="Shiraki T."/>
            <person name="Suzuki S."/>
            <person name="Tagami M."/>
            <person name="Waki K."/>
            <person name="Watahiki A."/>
            <person name="Okamura-Oho Y."/>
            <person name="Suzuki H."/>
            <person name="Kawai J."/>
            <person name="Hayashizaki Y."/>
        </authorList>
    </citation>
    <scope>NUCLEOTIDE SEQUENCE [LARGE SCALE MRNA]</scope>
    <source>
        <strain>C57BL/6J</strain>
        <tissue>Retina</tissue>
    </source>
</reference>
<reference key="2">
    <citation type="submission" date="2005-09" db="EMBL/GenBank/DDBJ databases">
        <authorList>
            <person name="Mural R.J."/>
            <person name="Adams M.D."/>
            <person name="Myers E.W."/>
            <person name="Smith H.O."/>
            <person name="Venter J.C."/>
        </authorList>
    </citation>
    <scope>NUCLEOTIDE SEQUENCE [LARGE SCALE GENOMIC DNA]</scope>
</reference>
<reference key="3">
    <citation type="journal article" date="2004" name="Genome Res.">
        <title>The status, quality, and expansion of the NIH full-length cDNA project: the Mammalian Gene Collection (MGC).</title>
        <authorList>
            <consortium name="The MGC Project Team"/>
        </authorList>
    </citation>
    <scope>NUCLEOTIDE SEQUENCE [LARGE SCALE MRNA]</scope>
    <source>
        <strain>C57BL/6J</strain>
        <tissue>Thymus</tissue>
    </source>
</reference>